<proteinExistence type="inferred from homology"/>
<feature type="chain" id="PRO_1000015664" description="Elongation factor Tu">
    <location>
        <begin position="1"/>
        <end position="394"/>
    </location>
</feature>
<feature type="domain" description="tr-type G">
    <location>
        <begin position="10"/>
        <end position="204"/>
    </location>
</feature>
<feature type="region of interest" description="G1" evidence="1">
    <location>
        <begin position="19"/>
        <end position="26"/>
    </location>
</feature>
<feature type="region of interest" description="G2" evidence="1">
    <location>
        <begin position="60"/>
        <end position="64"/>
    </location>
</feature>
<feature type="region of interest" description="G3" evidence="1">
    <location>
        <begin position="81"/>
        <end position="84"/>
    </location>
</feature>
<feature type="region of interest" description="G4" evidence="1">
    <location>
        <begin position="136"/>
        <end position="139"/>
    </location>
</feature>
<feature type="region of interest" description="G5" evidence="1">
    <location>
        <begin position="174"/>
        <end position="176"/>
    </location>
</feature>
<feature type="binding site" evidence="2">
    <location>
        <begin position="19"/>
        <end position="26"/>
    </location>
    <ligand>
        <name>GTP</name>
        <dbReference type="ChEBI" id="CHEBI:37565"/>
    </ligand>
</feature>
<feature type="binding site" evidence="2">
    <location>
        <position position="26"/>
    </location>
    <ligand>
        <name>Mg(2+)</name>
        <dbReference type="ChEBI" id="CHEBI:18420"/>
    </ligand>
</feature>
<feature type="binding site" evidence="2">
    <location>
        <begin position="81"/>
        <end position="85"/>
    </location>
    <ligand>
        <name>GTP</name>
        <dbReference type="ChEBI" id="CHEBI:37565"/>
    </ligand>
</feature>
<feature type="binding site" evidence="2">
    <location>
        <begin position="136"/>
        <end position="139"/>
    </location>
    <ligand>
        <name>GTP</name>
        <dbReference type="ChEBI" id="CHEBI:37565"/>
    </ligand>
</feature>
<evidence type="ECO:0000250" key="1"/>
<evidence type="ECO:0000255" key="2">
    <source>
        <dbReference type="HAMAP-Rule" id="MF_00118"/>
    </source>
</evidence>
<dbReference type="EC" id="3.6.5.3" evidence="2"/>
<dbReference type="EMBL" id="AJ749949">
    <property type="protein sequence ID" value="CAG44770.1"/>
    <property type="molecule type" value="Genomic_DNA"/>
</dbReference>
<dbReference type="RefSeq" id="WP_003028672.1">
    <property type="nucleotide sequence ID" value="NC_006570.2"/>
</dbReference>
<dbReference type="RefSeq" id="YP_169203.1">
    <property type="nucleotide sequence ID" value="NC_006570.2"/>
</dbReference>
<dbReference type="SMR" id="Q5NID9"/>
<dbReference type="IntAct" id="Q5NID9">
    <property type="interactions" value="11"/>
</dbReference>
<dbReference type="STRING" id="177416.FTT_0137"/>
<dbReference type="DNASU" id="3190712"/>
<dbReference type="EnsemblBacteria" id="CAG44770">
    <property type="protein sequence ID" value="CAG44770"/>
    <property type="gene ID" value="FTT_0137"/>
</dbReference>
<dbReference type="KEGG" id="ftu:FTT_0137"/>
<dbReference type="eggNOG" id="COG0050">
    <property type="taxonomic scope" value="Bacteria"/>
</dbReference>
<dbReference type="OrthoDB" id="9803139at2"/>
<dbReference type="Proteomes" id="UP000001174">
    <property type="component" value="Chromosome"/>
</dbReference>
<dbReference type="GO" id="GO:0005829">
    <property type="term" value="C:cytosol"/>
    <property type="evidence" value="ECO:0007669"/>
    <property type="project" value="TreeGrafter"/>
</dbReference>
<dbReference type="GO" id="GO:0005525">
    <property type="term" value="F:GTP binding"/>
    <property type="evidence" value="ECO:0007669"/>
    <property type="project" value="UniProtKB-UniRule"/>
</dbReference>
<dbReference type="GO" id="GO:0003924">
    <property type="term" value="F:GTPase activity"/>
    <property type="evidence" value="ECO:0007669"/>
    <property type="project" value="InterPro"/>
</dbReference>
<dbReference type="GO" id="GO:0097216">
    <property type="term" value="F:guanosine tetraphosphate binding"/>
    <property type="evidence" value="ECO:0007669"/>
    <property type="project" value="UniProtKB-ARBA"/>
</dbReference>
<dbReference type="GO" id="GO:0003746">
    <property type="term" value="F:translation elongation factor activity"/>
    <property type="evidence" value="ECO:0007669"/>
    <property type="project" value="UniProtKB-UniRule"/>
</dbReference>
<dbReference type="CDD" id="cd01884">
    <property type="entry name" value="EF_Tu"/>
    <property type="match status" value="1"/>
</dbReference>
<dbReference type="CDD" id="cd03697">
    <property type="entry name" value="EFTU_II"/>
    <property type="match status" value="1"/>
</dbReference>
<dbReference type="CDD" id="cd03707">
    <property type="entry name" value="EFTU_III"/>
    <property type="match status" value="1"/>
</dbReference>
<dbReference type="FunFam" id="2.40.30.10:FF:000001">
    <property type="entry name" value="Elongation factor Tu"/>
    <property type="match status" value="1"/>
</dbReference>
<dbReference type="FunFam" id="3.40.50.300:FF:000003">
    <property type="entry name" value="Elongation factor Tu"/>
    <property type="match status" value="1"/>
</dbReference>
<dbReference type="Gene3D" id="3.40.50.300">
    <property type="entry name" value="P-loop containing nucleotide triphosphate hydrolases"/>
    <property type="match status" value="1"/>
</dbReference>
<dbReference type="Gene3D" id="2.40.30.10">
    <property type="entry name" value="Translation factors"/>
    <property type="match status" value="2"/>
</dbReference>
<dbReference type="HAMAP" id="MF_00118_B">
    <property type="entry name" value="EF_Tu_B"/>
    <property type="match status" value="1"/>
</dbReference>
<dbReference type="InterPro" id="IPR041709">
    <property type="entry name" value="EF-Tu_GTP-bd"/>
</dbReference>
<dbReference type="InterPro" id="IPR050055">
    <property type="entry name" value="EF-Tu_GTPase"/>
</dbReference>
<dbReference type="InterPro" id="IPR004161">
    <property type="entry name" value="EFTu-like_2"/>
</dbReference>
<dbReference type="InterPro" id="IPR033720">
    <property type="entry name" value="EFTU_2"/>
</dbReference>
<dbReference type="InterPro" id="IPR031157">
    <property type="entry name" value="G_TR_CS"/>
</dbReference>
<dbReference type="InterPro" id="IPR027417">
    <property type="entry name" value="P-loop_NTPase"/>
</dbReference>
<dbReference type="InterPro" id="IPR005225">
    <property type="entry name" value="Small_GTP-bd"/>
</dbReference>
<dbReference type="InterPro" id="IPR000795">
    <property type="entry name" value="T_Tr_GTP-bd_dom"/>
</dbReference>
<dbReference type="InterPro" id="IPR009000">
    <property type="entry name" value="Transl_B-barrel_sf"/>
</dbReference>
<dbReference type="InterPro" id="IPR009001">
    <property type="entry name" value="Transl_elong_EF1A/Init_IF2_C"/>
</dbReference>
<dbReference type="InterPro" id="IPR004541">
    <property type="entry name" value="Transl_elong_EFTu/EF1A_bac/org"/>
</dbReference>
<dbReference type="InterPro" id="IPR004160">
    <property type="entry name" value="Transl_elong_EFTu/EF1A_C"/>
</dbReference>
<dbReference type="NCBIfam" id="TIGR00485">
    <property type="entry name" value="EF-Tu"/>
    <property type="match status" value="1"/>
</dbReference>
<dbReference type="NCBIfam" id="NF000766">
    <property type="entry name" value="PRK00049.1"/>
    <property type="match status" value="1"/>
</dbReference>
<dbReference type="NCBIfam" id="NF009372">
    <property type="entry name" value="PRK12735.1"/>
    <property type="match status" value="1"/>
</dbReference>
<dbReference type="NCBIfam" id="NF009373">
    <property type="entry name" value="PRK12736.1"/>
    <property type="match status" value="1"/>
</dbReference>
<dbReference type="NCBIfam" id="TIGR00231">
    <property type="entry name" value="small_GTP"/>
    <property type="match status" value="1"/>
</dbReference>
<dbReference type="PANTHER" id="PTHR43721:SF22">
    <property type="entry name" value="ELONGATION FACTOR TU, MITOCHONDRIAL"/>
    <property type="match status" value="1"/>
</dbReference>
<dbReference type="PANTHER" id="PTHR43721">
    <property type="entry name" value="ELONGATION FACTOR TU-RELATED"/>
    <property type="match status" value="1"/>
</dbReference>
<dbReference type="Pfam" id="PF00009">
    <property type="entry name" value="GTP_EFTU"/>
    <property type="match status" value="1"/>
</dbReference>
<dbReference type="Pfam" id="PF03144">
    <property type="entry name" value="GTP_EFTU_D2"/>
    <property type="match status" value="1"/>
</dbReference>
<dbReference type="Pfam" id="PF03143">
    <property type="entry name" value="GTP_EFTU_D3"/>
    <property type="match status" value="1"/>
</dbReference>
<dbReference type="PRINTS" id="PR00315">
    <property type="entry name" value="ELONGATNFCT"/>
</dbReference>
<dbReference type="SUPFAM" id="SSF50465">
    <property type="entry name" value="EF-Tu/eEF-1alpha/eIF2-gamma C-terminal domain"/>
    <property type="match status" value="1"/>
</dbReference>
<dbReference type="SUPFAM" id="SSF52540">
    <property type="entry name" value="P-loop containing nucleoside triphosphate hydrolases"/>
    <property type="match status" value="1"/>
</dbReference>
<dbReference type="SUPFAM" id="SSF50447">
    <property type="entry name" value="Translation proteins"/>
    <property type="match status" value="1"/>
</dbReference>
<dbReference type="PROSITE" id="PS00301">
    <property type="entry name" value="G_TR_1"/>
    <property type="match status" value="1"/>
</dbReference>
<dbReference type="PROSITE" id="PS51722">
    <property type="entry name" value="G_TR_2"/>
    <property type="match status" value="1"/>
</dbReference>
<protein>
    <recommendedName>
        <fullName evidence="2">Elongation factor Tu</fullName>
        <shortName evidence="2">EF-Tu</shortName>
        <ecNumber evidence="2">3.6.5.3</ecNumber>
    </recommendedName>
</protein>
<accession>Q5NID9</accession>
<sequence>MAKEKFERSKPHVNVGTIGHVDHGKTTLTAAITKVMAEKNGGMARKFDEIDSAPEEKARGITINTSHVEYESPNRHYAHVDCPGHADYVKNMITGAAQMDGAILVCSAADGPMPQTREHILLSRQVGVPKIVVFLNKCDMVDDEELLELVEMEVRELLDQYEFPGDDTPVIMGSALRAIEGDEAYVEKIVELVQAMDDYIPAPERDTEKPFILPIEDVFSISGRGTVVTGRIERGVVNIGDEVEVVGIRPTQKTTVTGVEMFRKLLDRGEAGDNVGILVRGLKRDDVERGQVLCKPGSIKPHTKFEAEVYVLSKEEGGRHTPFFKGYRPQFYFRTTDITGAVELPEGVEMVMPGDNVKMTITLINPIAMDEGLRFAIREGGRTVGAGVVAKIIE</sequence>
<gene>
    <name evidence="2" type="primary">tuf</name>
    <name type="ordered locus">FTT_0137</name>
</gene>
<comment type="function">
    <text evidence="2">GTP hydrolase that promotes the GTP-dependent binding of aminoacyl-tRNA to the A-site of ribosomes during protein biosynthesis.</text>
</comment>
<comment type="catalytic activity">
    <reaction evidence="2">
        <text>GTP + H2O = GDP + phosphate + H(+)</text>
        <dbReference type="Rhea" id="RHEA:19669"/>
        <dbReference type="ChEBI" id="CHEBI:15377"/>
        <dbReference type="ChEBI" id="CHEBI:15378"/>
        <dbReference type="ChEBI" id="CHEBI:37565"/>
        <dbReference type="ChEBI" id="CHEBI:43474"/>
        <dbReference type="ChEBI" id="CHEBI:58189"/>
        <dbReference type="EC" id="3.6.5.3"/>
    </reaction>
    <physiologicalReaction direction="left-to-right" evidence="2">
        <dbReference type="Rhea" id="RHEA:19670"/>
    </physiologicalReaction>
</comment>
<comment type="subunit">
    <text evidence="2">Monomer.</text>
</comment>
<comment type="subcellular location">
    <subcellularLocation>
        <location evidence="2">Cytoplasm</location>
    </subcellularLocation>
</comment>
<comment type="similarity">
    <text evidence="2">Belongs to the TRAFAC class translation factor GTPase superfamily. Classic translation factor GTPase family. EF-Tu/EF-1A subfamily.</text>
</comment>
<keyword id="KW-0963">Cytoplasm</keyword>
<keyword id="KW-0251">Elongation factor</keyword>
<keyword id="KW-0342">GTP-binding</keyword>
<keyword id="KW-0378">Hydrolase</keyword>
<keyword id="KW-0460">Magnesium</keyword>
<keyword id="KW-0479">Metal-binding</keyword>
<keyword id="KW-0547">Nucleotide-binding</keyword>
<keyword id="KW-0648">Protein biosynthesis</keyword>
<keyword id="KW-1185">Reference proteome</keyword>
<reference key="1">
    <citation type="journal article" date="2005" name="Nat. Genet.">
        <title>The complete genome sequence of Francisella tularensis, the causative agent of tularemia.</title>
        <authorList>
            <person name="Larsson P."/>
            <person name="Oyston P.C.F."/>
            <person name="Chain P."/>
            <person name="Chu M.C."/>
            <person name="Duffield M."/>
            <person name="Fuxelius H.-H."/>
            <person name="Garcia E."/>
            <person name="Haelltorp G."/>
            <person name="Johansson D."/>
            <person name="Isherwood K.E."/>
            <person name="Karp P.D."/>
            <person name="Larsson E."/>
            <person name="Liu Y."/>
            <person name="Michell S."/>
            <person name="Prior J."/>
            <person name="Prior R."/>
            <person name="Malfatti S."/>
            <person name="Sjoestedt A."/>
            <person name="Svensson K."/>
            <person name="Thompson N."/>
            <person name="Vergez L."/>
            <person name="Wagg J.K."/>
            <person name="Wren B.W."/>
            <person name="Lindler L.E."/>
            <person name="Andersson S.G.E."/>
            <person name="Forsman M."/>
            <person name="Titball R.W."/>
        </authorList>
    </citation>
    <scope>NUCLEOTIDE SEQUENCE [LARGE SCALE GENOMIC DNA]</scope>
    <source>
        <strain>SCHU S4 / Schu 4</strain>
    </source>
</reference>
<name>EFTU_FRATT</name>
<organism>
    <name type="scientific">Francisella tularensis subsp. tularensis (strain SCHU S4 / Schu 4)</name>
    <dbReference type="NCBI Taxonomy" id="177416"/>
    <lineage>
        <taxon>Bacteria</taxon>
        <taxon>Pseudomonadati</taxon>
        <taxon>Pseudomonadota</taxon>
        <taxon>Gammaproteobacteria</taxon>
        <taxon>Thiotrichales</taxon>
        <taxon>Francisellaceae</taxon>
        <taxon>Francisella</taxon>
    </lineage>
</organism>